<comment type="function">
    <text evidence="1">This protein binds specifically to 23S rRNA; its binding is stimulated by other ribosomal proteins, e.g. L4, L17, and L20. It is important during the early stages of 50S assembly. It makes multiple contacts with different domains of the 23S rRNA in the assembled 50S subunit and ribosome (By similarity).</text>
</comment>
<comment type="function">
    <text evidence="1">The globular domain of the protein is located near the polypeptide exit tunnel on the outside of the subunit, while an extended beta-hairpin is found that lines the wall of the exit tunnel in the center of the 70S ribosome.</text>
</comment>
<comment type="subunit">
    <text evidence="1">Part of the 50S ribosomal subunit.</text>
</comment>
<comment type="similarity">
    <text evidence="1">Belongs to the universal ribosomal protein uL22 family.</text>
</comment>
<proteinExistence type="inferred from homology"/>
<name>RL22_CAMHC</name>
<sequence>MSKSTIKFVRLSPTKTRLIAKEIQGMNAEFALATLEFTPNRGAKYIANAILSAVANGGFEPNEVIVKSCRVDAGPVLKRFRPRARGTASRIRKPTSHIMVEVSKPSKEA</sequence>
<feature type="chain" id="PRO_0000354453" description="Large ribosomal subunit protein uL22">
    <location>
        <begin position="1"/>
        <end position="109"/>
    </location>
</feature>
<feature type="region of interest" description="Disordered" evidence="2">
    <location>
        <begin position="84"/>
        <end position="109"/>
    </location>
</feature>
<feature type="compositionally biased region" description="Basic residues" evidence="2">
    <location>
        <begin position="84"/>
        <end position="95"/>
    </location>
</feature>
<accession>A7HZL1</accession>
<evidence type="ECO:0000255" key="1">
    <source>
        <dbReference type="HAMAP-Rule" id="MF_01331"/>
    </source>
</evidence>
<evidence type="ECO:0000256" key="2">
    <source>
        <dbReference type="SAM" id="MobiDB-lite"/>
    </source>
</evidence>
<evidence type="ECO:0000305" key="3"/>
<keyword id="KW-1185">Reference proteome</keyword>
<keyword id="KW-0687">Ribonucleoprotein</keyword>
<keyword id="KW-0689">Ribosomal protein</keyword>
<keyword id="KW-0694">RNA-binding</keyword>
<keyword id="KW-0699">rRNA-binding</keyword>
<gene>
    <name evidence="1" type="primary">rplV</name>
    <name type="ordered locus">CHAB381_0089</name>
</gene>
<reference key="1">
    <citation type="submission" date="2007-07" db="EMBL/GenBank/DDBJ databases">
        <title>Complete genome sequence of Campylobacter hominis ATCC BAA-381, a commensal isolated from the human gastrointestinal tract.</title>
        <authorList>
            <person name="Fouts D.E."/>
            <person name="Mongodin E.F."/>
            <person name="Puiu D."/>
            <person name="Sebastian Y."/>
            <person name="Miller W.G."/>
            <person name="Mandrell R.E."/>
            <person name="Nelson K.E."/>
        </authorList>
    </citation>
    <scope>NUCLEOTIDE SEQUENCE [LARGE SCALE GENOMIC DNA]</scope>
    <source>
        <strain>ATCC BAA-381 / DSM 21671 / CCUG 45161 / LMG 19568 / NCTC 13146 / CH001A</strain>
    </source>
</reference>
<dbReference type="EMBL" id="CP000776">
    <property type="protein sequence ID" value="ABS52299.1"/>
    <property type="molecule type" value="Genomic_DNA"/>
</dbReference>
<dbReference type="SMR" id="A7HZL1"/>
<dbReference type="STRING" id="360107.CHAB381_0089"/>
<dbReference type="KEGG" id="cha:CHAB381_0089"/>
<dbReference type="eggNOG" id="COG0091">
    <property type="taxonomic scope" value="Bacteria"/>
</dbReference>
<dbReference type="HOGENOM" id="CLU_083987_3_3_7"/>
<dbReference type="OrthoDB" id="9805969at2"/>
<dbReference type="Proteomes" id="UP000002407">
    <property type="component" value="Chromosome"/>
</dbReference>
<dbReference type="GO" id="GO:0022625">
    <property type="term" value="C:cytosolic large ribosomal subunit"/>
    <property type="evidence" value="ECO:0007669"/>
    <property type="project" value="TreeGrafter"/>
</dbReference>
<dbReference type="GO" id="GO:0019843">
    <property type="term" value="F:rRNA binding"/>
    <property type="evidence" value="ECO:0007669"/>
    <property type="project" value="UniProtKB-UniRule"/>
</dbReference>
<dbReference type="GO" id="GO:0003735">
    <property type="term" value="F:structural constituent of ribosome"/>
    <property type="evidence" value="ECO:0007669"/>
    <property type="project" value="InterPro"/>
</dbReference>
<dbReference type="GO" id="GO:0006412">
    <property type="term" value="P:translation"/>
    <property type="evidence" value="ECO:0007669"/>
    <property type="project" value="UniProtKB-UniRule"/>
</dbReference>
<dbReference type="CDD" id="cd00336">
    <property type="entry name" value="Ribosomal_L22"/>
    <property type="match status" value="1"/>
</dbReference>
<dbReference type="Gene3D" id="3.90.470.10">
    <property type="entry name" value="Ribosomal protein L22/L17"/>
    <property type="match status" value="1"/>
</dbReference>
<dbReference type="HAMAP" id="MF_01331_B">
    <property type="entry name" value="Ribosomal_uL22_B"/>
    <property type="match status" value="1"/>
</dbReference>
<dbReference type="InterPro" id="IPR001063">
    <property type="entry name" value="Ribosomal_uL22"/>
</dbReference>
<dbReference type="InterPro" id="IPR005727">
    <property type="entry name" value="Ribosomal_uL22_bac/chlpt-type"/>
</dbReference>
<dbReference type="InterPro" id="IPR047867">
    <property type="entry name" value="Ribosomal_uL22_bac/org-type"/>
</dbReference>
<dbReference type="InterPro" id="IPR036394">
    <property type="entry name" value="Ribosomal_uL22_sf"/>
</dbReference>
<dbReference type="NCBIfam" id="TIGR01044">
    <property type="entry name" value="rplV_bact"/>
    <property type="match status" value="1"/>
</dbReference>
<dbReference type="PANTHER" id="PTHR13501">
    <property type="entry name" value="CHLOROPLAST 50S RIBOSOMAL PROTEIN L22-RELATED"/>
    <property type="match status" value="1"/>
</dbReference>
<dbReference type="PANTHER" id="PTHR13501:SF8">
    <property type="entry name" value="LARGE RIBOSOMAL SUBUNIT PROTEIN UL22M"/>
    <property type="match status" value="1"/>
</dbReference>
<dbReference type="Pfam" id="PF00237">
    <property type="entry name" value="Ribosomal_L22"/>
    <property type="match status" value="1"/>
</dbReference>
<dbReference type="SUPFAM" id="SSF54843">
    <property type="entry name" value="Ribosomal protein L22"/>
    <property type="match status" value="1"/>
</dbReference>
<organism>
    <name type="scientific">Campylobacter hominis (strain ATCC BAA-381 / DSM 21671 / CCUG 45161 / LMG 19568 / NCTC 13146 / CH001A)</name>
    <dbReference type="NCBI Taxonomy" id="360107"/>
    <lineage>
        <taxon>Bacteria</taxon>
        <taxon>Pseudomonadati</taxon>
        <taxon>Campylobacterota</taxon>
        <taxon>Epsilonproteobacteria</taxon>
        <taxon>Campylobacterales</taxon>
        <taxon>Campylobacteraceae</taxon>
        <taxon>Campylobacter</taxon>
    </lineage>
</organism>
<protein>
    <recommendedName>
        <fullName evidence="1">Large ribosomal subunit protein uL22</fullName>
    </recommendedName>
    <alternativeName>
        <fullName evidence="3">50S ribosomal protein L22</fullName>
    </alternativeName>
</protein>